<organism>
    <name type="scientific">Corynebacterium jeikeium (strain K411)</name>
    <dbReference type="NCBI Taxonomy" id="306537"/>
    <lineage>
        <taxon>Bacteria</taxon>
        <taxon>Bacillati</taxon>
        <taxon>Actinomycetota</taxon>
        <taxon>Actinomycetes</taxon>
        <taxon>Mycobacteriales</taxon>
        <taxon>Corynebacteriaceae</taxon>
        <taxon>Corynebacterium</taxon>
    </lineage>
</organism>
<comment type="function">
    <text evidence="1">Involved in the regulation of the intracellular balance of NAD and NADP, and is a key enzyme in the biosynthesis of NADP. Catalyzes specifically the phosphorylation on 2'-hydroxyl of the adenosine moiety of NAD to yield NADP.</text>
</comment>
<comment type="catalytic activity">
    <reaction evidence="1">
        <text>NAD(+) + ATP = ADP + NADP(+) + H(+)</text>
        <dbReference type="Rhea" id="RHEA:18629"/>
        <dbReference type="ChEBI" id="CHEBI:15378"/>
        <dbReference type="ChEBI" id="CHEBI:30616"/>
        <dbReference type="ChEBI" id="CHEBI:57540"/>
        <dbReference type="ChEBI" id="CHEBI:58349"/>
        <dbReference type="ChEBI" id="CHEBI:456216"/>
        <dbReference type="EC" id="2.7.1.23"/>
    </reaction>
</comment>
<comment type="cofactor">
    <cofactor evidence="1">
        <name>a divalent metal cation</name>
        <dbReference type="ChEBI" id="CHEBI:60240"/>
    </cofactor>
</comment>
<comment type="subcellular location">
    <subcellularLocation>
        <location evidence="1">Cytoplasm</location>
    </subcellularLocation>
</comment>
<comment type="similarity">
    <text evidence="1">Belongs to the NAD kinase family.</text>
</comment>
<accession>Q4JVX8</accession>
<dbReference type="EC" id="2.7.1.23" evidence="1"/>
<dbReference type="EMBL" id="CR931997">
    <property type="protein sequence ID" value="CAI37029.1"/>
    <property type="molecule type" value="Genomic_DNA"/>
</dbReference>
<dbReference type="RefSeq" id="WP_011273459.1">
    <property type="nucleotide sequence ID" value="NC_007164.1"/>
</dbReference>
<dbReference type="SMR" id="Q4JVX8"/>
<dbReference type="STRING" id="306537.jk0865"/>
<dbReference type="KEGG" id="cjk:jk0865"/>
<dbReference type="PATRIC" id="fig|306537.10.peg.878"/>
<dbReference type="eggNOG" id="COG0061">
    <property type="taxonomic scope" value="Bacteria"/>
</dbReference>
<dbReference type="HOGENOM" id="CLU_008831_0_0_11"/>
<dbReference type="OrthoDB" id="9774737at2"/>
<dbReference type="Proteomes" id="UP000000545">
    <property type="component" value="Chromosome"/>
</dbReference>
<dbReference type="GO" id="GO:0005737">
    <property type="term" value="C:cytoplasm"/>
    <property type="evidence" value="ECO:0007669"/>
    <property type="project" value="UniProtKB-SubCell"/>
</dbReference>
<dbReference type="GO" id="GO:0005524">
    <property type="term" value="F:ATP binding"/>
    <property type="evidence" value="ECO:0007669"/>
    <property type="project" value="UniProtKB-KW"/>
</dbReference>
<dbReference type="GO" id="GO:0046872">
    <property type="term" value="F:metal ion binding"/>
    <property type="evidence" value="ECO:0007669"/>
    <property type="project" value="UniProtKB-UniRule"/>
</dbReference>
<dbReference type="GO" id="GO:0051287">
    <property type="term" value="F:NAD binding"/>
    <property type="evidence" value="ECO:0007669"/>
    <property type="project" value="UniProtKB-ARBA"/>
</dbReference>
<dbReference type="GO" id="GO:0003951">
    <property type="term" value="F:NAD+ kinase activity"/>
    <property type="evidence" value="ECO:0007669"/>
    <property type="project" value="UniProtKB-UniRule"/>
</dbReference>
<dbReference type="GO" id="GO:0019674">
    <property type="term" value="P:NAD metabolic process"/>
    <property type="evidence" value="ECO:0007669"/>
    <property type="project" value="InterPro"/>
</dbReference>
<dbReference type="GO" id="GO:0006741">
    <property type="term" value="P:NADP biosynthetic process"/>
    <property type="evidence" value="ECO:0007669"/>
    <property type="project" value="UniProtKB-UniRule"/>
</dbReference>
<dbReference type="FunFam" id="2.60.200.30:FF:000007">
    <property type="entry name" value="NAD kinase"/>
    <property type="match status" value="1"/>
</dbReference>
<dbReference type="Gene3D" id="3.40.50.10330">
    <property type="entry name" value="Probable inorganic polyphosphate/atp-NAD kinase, domain 1"/>
    <property type="match status" value="1"/>
</dbReference>
<dbReference type="Gene3D" id="2.60.200.30">
    <property type="entry name" value="Probable inorganic polyphosphate/atp-NAD kinase, domain 2"/>
    <property type="match status" value="1"/>
</dbReference>
<dbReference type="HAMAP" id="MF_00361">
    <property type="entry name" value="NAD_kinase"/>
    <property type="match status" value="1"/>
</dbReference>
<dbReference type="InterPro" id="IPR017438">
    <property type="entry name" value="ATP-NAD_kinase_N"/>
</dbReference>
<dbReference type="InterPro" id="IPR017437">
    <property type="entry name" value="ATP-NAD_kinase_PpnK-typ_C"/>
</dbReference>
<dbReference type="InterPro" id="IPR016064">
    <property type="entry name" value="NAD/diacylglycerol_kinase_sf"/>
</dbReference>
<dbReference type="InterPro" id="IPR002504">
    <property type="entry name" value="NADK"/>
</dbReference>
<dbReference type="NCBIfam" id="NF002892">
    <property type="entry name" value="PRK03372.1"/>
    <property type="match status" value="1"/>
</dbReference>
<dbReference type="PANTHER" id="PTHR20275">
    <property type="entry name" value="NAD KINASE"/>
    <property type="match status" value="1"/>
</dbReference>
<dbReference type="PANTHER" id="PTHR20275:SF0">
    <property type="entry name" value="NAD KINASE"/>
    <property type="match status" value="1"/>
</dbReference>
<dbReference type="Pfam" id="PF01513">
    <property type="entry name" value="NAD_kinase"/>
    <property type="match status" value="1"/>
</dbReference>
<dbReference type="Pfam" id="PF20143">
    <property type="entry name" value="NAD_kinase_C"/>
    <property type="match status" value="1"/>
</dbReference>
<dbReference type="SUPFAM" id="SSF111331">
    <property type="entry name" value="NAD kinase/diacylglycerol kinase-like"/>
    <property type="match status" value="1"/>
</dbReference>
<proteinExistence type="inferred from homology"/>
<evidence type="ECO:0000255" key="1">
    <source>
        <dbReference type="HAMAP-Rule" id="MF_00361"/>
    </source>
</evidence>
<evidence type="ECO:0000256" key="2">
    <source>
        <dbReference type="SAM" id="MobiDB-lite"/>
    </source>
</evidence>
<reference key="1">
    <citation type="journal article" date="2005" name="J. Bacteriol.">
        <title>Complete genome sequence and analysis of the multiresistant nosocomial pathogen Corynebacterium jeikeium K411, a lipid-requiring bacterium of the human skin flora.</title>
        <authorList>
            <person name="Tauch A."/>
            <person name="Kaiser O."/>
            <person name="Hain T."/>
            <person name="Goesmann A."/>
            <person name="Weisshaar B."/>
            <person name="Albersmeier A."/>
            <person name="Bekel T."/>
            <person name="Bischoff N."/>
            <person name="Brune I."/>
            <person name="Chakraborty T."/>
            <person name="Kalinowski J."/>
            <person name="Meyer F."/>
            <person name="Rupp O."/>
            <person name="Schneiker S."/>
            <person name="Viehoever P."/>
            <person name="Puehler A."/>
        </authorList>
    </citation>
    <scope>NUCLEOTIDE SEQUENCE [LARGE SCALE GENOMIC DNA]</scope>
    <source>
        <strain>K411</strain>
    </source>
</reference>
<feature type="chain" id="PRO_0000229628" description="NAD kinase">
    <location>
        <begin position="1"/>
        <end position="329"/>
    </location>
</feature>
<feature type="region of interest" description="Disordered" evidence="2">
    <location>
        <begin position="1"/>
        <end position="26"/>
    </location>
</feature>
<feature type="active site" description="Proton acceptor" evidence="1">
    <location>
        <position position="104"/>
    </location>
</feature>
<feature type="binding site" evidence="1">
    <location>
        <begin position="104"/>
        <end position="105"/>
    </location>
    <ligand>
        <name>NAD(+)</name>
        <dbReference type="ChEBI" id="CHEBI:57540"/>
    </ligand>
</feature>
<feature type="binding site" evidence="1">
    <location>
        <position position="109"/>
    </location>
    <ligand>
        <name>NAD(+)</name>
        <dbReference type="ChEBI" id="CHEBI:57540"/>
    </ligand>
</feature>
<feature type="binding site" evidence="1">
    <location>
        <begin position="179"/>
        <end position="180"/>
    </location>
    <ligand>
        <name>NAD(+)</name>
        <dbReference type="ChEBI" id="CHEBI:57540"/>
    </ligand>
</feature>
<feature type="binding site" evidence="1">
    <location>
        <position position="209"/>
    </location>
    <ligand>
        <name>NAD(+)</name>
        <dbReference type="ChEBI" id="CHEBI:57540"/>
    </ligand>
</feature>
<feature type="binding site" evidence="1">
    <location>
        <begin position="220"/>
        <end position="225"/>
    </location>
    <ligand>
        <name>NAD(+)</name>
        <dbReference type="ChEBI" id="CHEBI:57540"/>
    </ligand>
</feature>
<keyword id="KW-0067">ATP-binding</keyword>
<keyword id="KW-0963">Cytoplasm</keyword>
<keyword id="KW-0418">Kinase</keyword>
<keyword id="KW-0520">NAD</keyword>
<keyword id="KW-0521">NADP</keyword>
<keyword id="KW-0547">Nucleotide-binding</keyword>
<keyword id="KW-1185">Reference proteome</keyword>
<keyword id="KW-0808">Transferase</keyword>
<protein>
    <recommendedName>
        <fullName evidence="1">NAD kinase</fullName>
        <ecNumber evidence="1">2.7.1.23</ecNumber>
    </recommendedName>
    <alternativeName>
        <fullName evidence="1">ATP-dependent NAD kinase</fullName>
    </alternativeName>
</protein>
<name>NADK_CORJK</name>
<gene>
    <name evidence="1" type="primary">nadK</name>
    <name type="ordered locus">jk0865</name>
</gene>
<sequence>MTTPGTDHNADQGADSGDKATKAASGAQTEREVLLVAHTGVHENLGLAAEAASRLQKGGINVRVMATADPAPVARHEVLGRFKRFGHTKEAATGVEMVIVLGGDGTFLRAADIAHSADVPVLGINMGHIGFLAEWEQESLQEAVDRVIDRDYRIEDRMTLSITARDMDGRVLGTGWALNECSVENLNRQGVLDTILEVDERPVSSFGCDGVLVSTPTGSTAYAFSAGGPVLWPELDAILVVTSNAHTLFSRPLVVSPNSMVAVETNPSTSPATVVMDGFRQIHMPPGARVEIRRGPQPVRWVRLDSAPFTDRLVHKFRLPVTGWRGPRH</sequence>